<feature type="chain" id="PRO_0000456616" description="Beta-toxin Tce4">
    <location>
        <begin position="1"/>
        <end position="61"/>
    </location>
</feature>
<feature type="domain" description="LCN-type CS-alpha/beta" evidence="3">
    <location>
        <begin position="1"/>
        <end position="61"/>
    </location>
</feature>
<feature type="modified residue" description="Cysteine amide" evidence="1">
    <location>
        <position position="61"/>
    </location>
</feature>
<feature type="disulfide bond" evidence="3">
    <location>
        <begin position="11"/>
        <end position="61"/>
    </location>
</feature>
<feature type="disulfide bond" evidence="3">
    <location>
        <begin position="15"/>
        <end position="37"/>
    </location>
</feature>
<feature type="disulfide bond" evidence="3">
    <location>
        <begin position="23"/>
        <end position="42"/>
    </location>
</feature>
<feature type="disulfide bond" evidence="3">
    <location>
        <begin position="27"/>
        <end position="44"/>
    </location>
</feature>
<proteinExistence type="evidence at protein level"/>
<organism evidence="4">
    <name type="scientific">Tityus cerroazul</name>
    <name type="common">Scorpion</name>
    <dbReference type="NCBI Taxonomy" id="2684170"/>
    <lineage>
        <taxon>Eukaryota</taxon>
        <taxon>Metazoa</taxon>
        <taxon>Ecdysozoa</taxon>
        <taxon>Arthropoda</taxon>
        <taxon>Chelicerata</taxon>
        <taxon>Arachnida</taxon>
        <taxon>Scorpiones</taxon>
        <taxon>Buthida</taxon>
        <taxon>Buthoidea</taxon>
        <taxon>Buthidae</taxon>
        <taxon>Tityus</taxon>
    </lineage>
</organism>
<accession>C0HM43</accession>
<keyword id="KW-0027">Amidation</keyword>
<keyword id="KW-0903">Direct protein sequencing</keyword>
<keyword id="KW-1015">Disulfide bond</keyword>
<keyword id="KW-0872">Ion channel impairing toxin</keyword>
<keyword id="KW-0528">Neurotoxin</keyword>
<keyword id="KW-0964">Secreted</keyword>
<keyword id="KW-0800">Toxin</keyword>
<keyword id="KW-0738">Voltage-gated sodium channel impairing toxin</keyword>
<comment type="function">
    <text evidence="2">Beta toxins bind voltage-independently at site-4 of sodium channels (Nav) and shift the voltage of activation toward more negative potentials thereby affecting sodium channel activation and promoting spontaneous and repetitive firing.</text>
</comment>
<comment type="subcellular location">
    <subcellularLocation>
        <location evidence="3">Secreted</location>
    </subcellularLocation>
</comment>
<comment type="tissue specificity">
    <text evidence="3">Expressed by the venom gland.</text>
</comment>
<comment type="domain">
    <text evidence="5">Has the structural arrangement of an alpha-helix connected to antiparallel beta-sheets by disulfide bonds (CS-alpha/beta).</text>
</comment>
<comment type="similarity">
    <text evidence="5">Belongs to the long (4 C-C) scorpion toxin superfamily. Sodium channel inhibitor family. Beta subfamily.</text>
</comment>
<name>SCNA2_TITCE</name>
<protein>
    <recommendedName>
        <fullName evidence="4">Beta-toxin Tce4</fullName>
    </recommendedName>
</protein>
<dbReference type="SMR" id="C0HM43"/>
<dbReference type="GO" id="GO:0005576">
    <property type="term" value="C:extracellular region"/>
    <property type="evidence" value="ECO:0007669"/>
    <property type="project" value="UniProtKB-SubCell"/>
</dbReference>
<dbReference type="GO" id="GO:0019871">
    <property type="term" value="F:sodium channel inhibitor activity"/>
    <property type="evidence" value="ECO:0007669"/>
    <property type="project" value="InterPro"/>
</dbReference>
<dbReference type="GO" id="GO:0090729">
    <property type="term" value="F:toxin activity"/>
    <property type="evidence" value="ECO:0007669"/>
    <property type="project" value="UniProtKB-KW"/>
</dbReference>
<dbReference type="GO" id="GO:0006952">
    <property type="term" value="P:defense response"/>
    <property type="evidence" value="ECO:0007669"/>
    <property type="project" value="InterPro"/>
</dbReference>
<dbReference type="CDD" id="cd23106">
    <property type="entry name" value="neurotoxins_LC_scorpion"/>
    <property type="match status" value="1"/>
</dbReference>
<dbReference type="FunFam" id="3.30.30.10:FF:000002">
    <property type="entry name" value="Alpha-like toxin BmK-M1"/>
    <property type="match status" value="1"/>
</dbReference>
<dbReference type="Gene3D" id="3.30.30.10">
    <property type="entry name" value="Knottin, scorpion toxin-like"/>
    <property type="match status" value="1"/>
</dbReference>
<dbReference type="InterPro" id="IPR044062">
    <property type="entry name" value="LCN-type_CS_alpha_beta_dom"/>
</dbReference>
<dbReference type="InterPro" id="IPR003614">
    <property type="entry name" value="Scorpion_toxin-like"/>
</dbReference>
<dbReference type="InterPro" id="IPR036574">
    <property type="entry name" value="Scorpion_toxin-like_sf"/>
</dbReference>
<dbReference type="InterPro" id="IPR018218">
    <property type="entry name" value="Scorpion_toxinL"/>
</dbReference>
<dbReference type="InterPro" id="IPR002061">
    <property type="entry name" value="Scorpion_toxinL/defensin"/>
</dbReference>
<dbReference type="Pfam" id="PF00537">
    <property type="entry name" value="Toxin_3"/>
    <property type="match status" value="1"/>
</dbReference>
<dbReference type="PRINTS" id="PR00285">
    <property type="entry name" value="SCORPNTOXIN"/>
</dbReference>
<dbReference type="SMART" id="SM00505">
    <property type="entry name" value="Knot1"/>
    <property type="match status" value="1"/>
</dbReference>
<dbReference type="SUPFAM" id="SSF57095">
    <property type="entry name" value="Scorpion toxin-like"/>
    <property type="match status" value="1"/>
</dbReference>
<dbReference type="PROSITE" id="PS51863">
    <property type="entry name" value="LCN_CSAB"/>
    <property type="match status" value="1"/>
</dbReference>
<evidence type="ECO:0000250" key="1">
    <source>
        <dbReference type="UniProtKB" id="P0DMM8"/>
    </source>
</evidence>
<evidence type="ECO:0000250" key="2">
    <source>
        <dbReference type="UniProtKB" id="P0DQH5"/>
    </source>
</evidence>
<evidence type="ECO:0000255" key="3">
    <source>
        <dbReference type="PROSITE-ProRule" id="PRU01210"/>
    </source>
</evidence>
<evidence type="ECO:0000303" key="4">
    <source ref="1"/>
</evidence>
<evidence type="ECO:0000305" key="5"/>
<sequence>KEGYLMDHEGCKLSCFIRPAGYCGRECAIKKGSEGYCAWPACYCYKLPNHVKVWEYATNRC</sequence>
<reference evidence="5" key="1">
    <citation type="submission" date="2022-03" db="UniProtKB">
        <authorList>
            <person name="Salazar M.H."/>
            <person name="Clement H."/>
            <person name="Corrales-Garcia L.L."/>
            <person name="Sanchez J."/>
            <person name="Cleghorn J."/>
            <person name="Acosta H."/>
            <person name="Corzo G."/>
        </authorList>
    </citation>
    <scope>PROTEIN SEQUENCE</scope>
</reference>